<dbReference type="EMBL" id="AE017350">
    <property type="protein sequence ID" value="AAW46028.1"/>
    <property type="molecule type" value="Genomic_DNA"/>
</dbReference>
<dbReference type="RefSeq" id="XP_567545.1">
    <property type="nucleotide sequence ID" value="XM_567545.1"/>
</dbReference>
<dbReference type="SMR" id="P0CO04"/>
<dbReference type="FunCoup" id="P0CO04">
    <property type="interactions" value="472"/>
</dbReference>
<dbReference type="STRING" id="214684.P0CO04"/>
<dbReference type="PaxDb" id="214684-P0CO04"/>
<dbReference type="EnsemblFungi" id="AAW46028">
    <property type="protein sequence ID" value="AAW46028"/>
    <property type="gene ID" value="CNJ02540"/>
</dbReference>
<dbReference type="GeneID" id="3254210"/>
<dbReference type="KEGG" id="cne:CNJ02540"/>
<dbReference type="VEuPathDB" id="FungiDB:CNJ02540"/>
<dbReference type="eggNOG" id="KOG1745">
    <property type="taxonomic scope" value="Eukaryota"/>
</dbReference>
<dbReference type="HOGENOM" id="CLU_078295_4_0_1"/>
<dbReference type="InParanoid" id="P0CO04"/>
<dbReference type="OMA" id="HIFAEMA"/>
<dbReference type="OrthoDB" id="842664at2759"/>
<dbReference type="Proteomes" id="UP000002149">
    <property type="component" value="Chromosome 10"/>
</dbReference>
<dbReference type="GO" id="GO:0000786">
    <property type="term" value="C:nucleosome"/>
    <property type="evidence" value="ECO:0007669"/>
    <property type="project" value="UniProtKB-KW"/>
</dbReference>
<dbReference type="GO" id="GO:0005634">
    <property type="term" value="C:nucleus"/>
    <property type="evidence" value="ECO:0000318"/>
    <property type="project" value="GO_Central"/>
</dbReference>
<dbReference type="GO" id="GO:0003677">
    <property type="term" value="F:DNA binding"/>
    <property type="evidence" value="ECO:0007669"/>
    <property type="project" value="UniProtKB-KW"/>
</dbReference>
<dbReference type="GO" id="GO:0046982">
    <property type="term" value="F:protein heterodimerization activity"/>
    <property type="evidence" value="ECO:0007669"/>
    <property type="project" value="InterPro"/>
</dbReference>
<dbReference type="GO" id="GO:0030527">
    <property type="term" value="F:structural constituent of chromatin"/>
    <property type="evidence" value="ECO:0007669"/>
    <property type="project" value="InterPro"/>
</dbReference>
<dbReference type="CDD" id="cd22911">
    <property type="entry name" value="HFD_H3"/>
    <property type="match status" value="1"/>
</dbReference>
<dbReference type="FunFam" id="1.10.20.10:FF:000001">
    <property type="entry name" value="Histone H3"/>
    <property type="match status" value="1"/>
</dbReference>
<dbReference type="Gene3D" id="1.10.20.10">
    <property type="entry name" value="Histone, subunit A"/>
    <property type="match status" value="1"/>
</dbReference>
<dbReference type="InterPro" id="IPR009072">
    <property type="entry name" value="Histone-fold"/>
</dbReference>
<dbReference type="InterPro" id="IPR007125">
    <property type="entry name" value="Histone_H2A/H2B/H3"/>
</dbReference>
<dbReference type="InterPro" id="IPR000164">
    <property type="entry name" value="Histone_H3/CENP-A"/>
</dbReference>
<dbReference type="PANTHER" id="PTHR11426">
    <property type="entry name" value="HISTONE H3"/>
    <property type="match status" value="1"/>
</dbReference>
<dbReference type="Pfam" id="PF00125">
    <property type="entry name" value="Histone"/>
    <property type="match status" value="1"/>
</dbReference>
<dbReference type="PRINTS" id="PR00622">
    <property type="entry name" value="HISTONEH3"/>
</dbReference>
<dbReference type="SMART" id="SM00428">
    <property type="entry name" value="H3"/>
    <property type="match status" value="1"/>
</dbReference>
<dbReference type="SUPFAM" id="SSF47113">
    <property type="entry name" value="Histone-fold"/>
    <property type="match status" value="1"/>
</dbReference>
<dbReference type="PROSITE" id="PS00322">
    <property type="entry name" value="HISTONE_H3_1"/>
    <property type="match status" value="1"/>
</dbReference>
<dbReference type="PROSITE" id="PS00959">
    <property type="entry name" value="HISTONE_H3_2"/>
    <property type="match status" value="1"/>
</dbReference>
<name>H3_CRYNJ</name>
<sequence>MARTKQTARKSTGGKAPRKQLATKAARKQAPSQVSGGVKKPHRYRPGTVALREIRRYQKSTELLIRKLPFQRLVREIAQDFKTDLRFQSSAIGALQEASEAYLVSLFEDTNLAAIHAKRVTIQPKDLQLARRLRGERS</sequence>
<protein>
    <recommendedName>
        <fullName>Histone H3</fullName>
    </recommendedName>
</protein>
<accession>P0CO04</accession>
<accession>Q55L92</accession>
<accession>Q5KA91</accession>
<feature type="initiator methionine" description="Removed" evidence="1">
    <location>
        <position position="1"/>
    </location>
</feature>
<feature type="chain" id="PRO_0000270589" description="Histone H3">
    <location>
        <begin position="2"/>
        <end position="138"/>
    </location>
</feature>
<feature type="region of interest" description="Disordered" evidence="2">
    <location>
        <begin position="1"/>
        <end position="49"/>
    </location>
</feature>
<feature type="modified residue" description="N6,N6,N6-trimethyllysine; alternate" evidence="1">
    <location>
        <position position="5"/>
    </location>
</feature>
<feature type="modified residue" description="N6,N6-dimethyllysine; alternate" evidence="1">
    <location>
        <position position="5"/>
    </location>
</feature>
<feature type="modified residue" description="N6-methyllysine; alternate" evidence="1">
    <location>
        <position position="5"/>
    </location>
</feature>
<feature type="modified residue" description="N6-acetyllysine; alternate" evidence="1">
    <location>
        <position position="10"/>
    </location>
</feature>
<feature type="modified residue" description="N6-methyllysine; alternate" evidence="1">
    <location>
        <position position="10"/>
    </location>
</feature>
<feature type="modified residue" description="Phosphoserine" evidence="1">
    <location>
        <position position="11"/>
    </location>
</feature>
<feature type="modified residue" description="N6,N6-dimethyllysine; alternate" evidence="1">
    <location>
        <position position="15"/>
    </location>
</feature>
<feature type="modified residue" description="N6-acetyllysine; alternate" evidence="1">
    <location>
        <position position="15"/>
    </location>
</feature>
<feature type="modified residue" description="N6-methyllysine; alternate" evidence="1">
    <location>
        <position position="15"/>
    </location>
</feature>
<feature type="modified residue" description="N6-acetyllysine; alternate" evidence="1">
    <location>
        <position position="19"/>
    </location>
</feature>
<feature type="modified residue" description="N6-methyllysine; alternate" evidence="1">
    <location>
        <position position="19"/>
    </location>
</feature>
<feature type="modified residue" description="N6-acetyllysine; alternate" evidence="1">
    <location>
        <position position="24"/>
    </location>
</feature>
<feature type="modified residue" description="N6-methyllysine; alternate" evidence="1">
    <location>
        <position position="24"/>
    </location>
</feature>
<feature type="modified residue" description="N6,N6,N6-trimethyllysine; alternate" evidence="1">
    <location>
        <position position="28"/>
    </location>
</feature>
<feature type="modified residue" description="N6,N6-dimethyllysine; alternate" evidence="1">
    <location>
        <position position="28"/>
    </location>
</feature>
<feature type="modified residue" description="N6-acetyllysine; alternate" evidence="1">
    <location>
        <position position="28"/>
    </location>
</feature>
<feature type="modified residue" description="N6-methyllysine; alternate" evidence="1">
    <location>
        <position position="28"/>
    </location>
</feature>
<feature type="modified residue" description="N6,N6,N6-trimethyllysine; alternate" evidence="1">
    <location>
        <position position="39"/>
    </location>
</feature>
<feature type="modified residue" description="N6,N6-dimethyllysine; alternate" evidence="1">
    <location>
        <position position="39"/>
    </location>
</feature>
<feature type="modified residue" description="N6-acetyllysine; alternate" evidence="1">
    <location>
        <position position="39"/>
    </location>
</feature>
<feature type="modified residue" description="N6-methyllysine; alternate" evidence="1">
    <location>
        <position position="39"/>
    </location>
</feature>
<feature type="modified residue" description="N6-acetyllysine" evidence="1">
    <location>
        <position position="59"/>
    </location>
</feature>
<feature type="modified residue" description="N6-acetyllysine" evidence="1">
    <location>
        <position position="67"/>
    </location>
</feature>
<feature type="modified residue" description="N6,N6,N6-trimethyllysine; alternate" evidence="1">
    <location>
        <position position="82"/>
    </location>
</feature>
<feature type="modified residue" description="N6,N6-dimethyllysine; alternate" evidence="1">
    <location>
        <position position="82"/>
    </location>
</feature>
<feature type="modified residue" description="N6-methyllysine; alternate" evidence="1">
    <location>
        <position position="82"/>
    </location>
</feature>
<gene>
    <name type="primary">HHT1</name>
    <name type="ordered locus">CNJ02540</name>
</gene>
<organism>
    <name type="scientific">Cryptococcus neoformans var. neoformans serotype D (strain JEC21 / ATCC MYA-565)</name>
    <name type="common">Filobasidiella neoformans</name>
    <dbReference type="NCBI Taxonomy" id="214684"/>
    <lineage>
        <taxon>Eukaryota</taxon>
        <taxon>Fungi</taxon>
        <taxon>Dikarya</taxon>
        <taxon>Basidiomycota</taxon>
        <taxon>Agaricomycotina</taxon>
        <taxon>Tremellomycetes</taxon>
        <taxon>Tremellales</taxon>
        <taxon>Cryptococcaceae</taxon>
        <taxon>Cryptococcus</taxon>
        <taxon>Cryptococcus neoformans species complex</taxon>
    </lineage>
</organism>
<evidence type="ECO:0000250" key="1"/>
<evidence type="ECO:0000256" key="2">
    <source>
        <dbReference type="SAM" id="MobiDB-lite"/>
    </source>
</evidence>
<evidence type="ECO:0000305" key="3"/>
<comment type="function">
    <text evidence="1">Core component of nucleosome. Nucleosomes wrap and compact DNA into chromatin, limiting DNA accessibility to the cellular machineries which require DNA as a template. Histones thereby play a central role in transcription regulation, DNA repair, DNA replication and chromosomal stability. DNA accessibility is regulated via a complex set of post-translational modifications of histones, also called histone code, and nucleosome remodeling (By similarity).</text>
</comment>
<comment type="subunit">
    <text evidence="1">The nucleosome is a histone octamer containing two molecules each of H2A, H2B, H3 and H4 assembled in one H3-H4 heterotetramer and two H2A-H2B heterodimers. The octamer wraps approximately 147 bp of DNA (By similarity).</text>
</comment>
<comment type="subcellular location">
    <subcellularLocation>
        <location evidence="1">Nucleus</location>
    </subcellularLocation>
    <subcellularLocation>
        <location evidence="1">Chromosome</location>
    </subcellularLocation>
</comment>
<comment type="PTM">
    <text evidence="1">Phosphorylated to form H3S10ph. H3S10ph promotes subsequent H3K14ac formation and is required for transcriptional activation through TBP recruitment to the promoters (By similarity).</text>
</comment>
<comment type="PTM">
    <text evidence="1">Mono-, di- and trimethylated by the COMPASS complex to form H3K4me1/2/3. H3K4me activates gene expression by regulating transcription elongation and plays a role in telomere length maintenance. H3K4me enrichment correlates with transcription levels, and occurs in a 5' to 3' gradient with H3K4me3 enrichment at the 5'-end of genes, shifting to H3K4me2 and then H3K4me1. Methylated by SET2 to form H3K36me. H3K36me represses gene expression. Methylated by DOT1 to form H3K79me. H3K79me is required for association of SIR proteins with telomeric regions and for telomeric silencing. The COMPASS-mediated formation of H3K4me2/3 and the DOT1-mediated formation of H3K79me require H2BK123ub1 (By similarity).</text>
</comment>
<comment type="PTM">
    <text evidence="1">Acetylation of histone H3 leads to transcriptional activation. H3K14ac formation by GCN5 is promoted by H3S10ph. H3K14ac can also be formed by ESA1. H3K56ac formation occurs predominantly in newly synthesized H3 molecules during G1, S and G2/M of the cell cycle and may be involved in DNA repair (By similarity).</text>
</comment>
<comment type="similarity">
    <text evidence="3">Belongs to the histone H3 family.</text>
</comment>
<comment type="caution">
    <text evidence="3">To ensure consistency between histone entries, we follow the 'Brno' nomenclature for histone modifications, with positions referring to those used in the literature for the 'closest' model organism. Due to slight variations in histone sequences between organisms and to the presence of initiator methionine in UniProtKB/Swiss-Prot sequences, the actual positions of modified amino acids in the sequence generally differ. In this entry the following conventions are used: H3K4me1/2/3 = mono-, di- and trimethylated Lys-5; H3K9ac = acetylated Lys-10; H3K9me1 = monomethylated Lys-10; H3S10ph = phosphorylated Ser-11; H3K14ac = acetylated Lys-15; H3K14me2 = dimethylated Lys-15; H3K18ac = acetylated Lys-19; H3K18me1 = monomethylated Lys-19; H3K23ac = acetylated Lys-24; H3K23me1 = monomethylated Lys-24; H3K27ac = acetylated Lys-28; H3K27me1/2/3 = mono-, di- and trimethylated Lys-28; H3K36ac = acetylated Lys-39; H3K36me1/2/3 = mono-, di- and trimethylated Lys-39; H3K56ac = acetylated Lys-59; H3K64ac = acetylated Lys-67; H3K79me1/2/3 = mono-, di- and trimethylated Lys-82.</text>
</comment>
<keyword id="KW-0007">Acetylation</keyword>
<keyword id="KW-0158">Chromosome</keyword>
<keyword id="KW-0238">DNA-binding</keyword>
<keyword id="KW-0488">Methylation</keyword>
<keyword id="KW-0544">Nucleosome core</keyword>
<keyword id="KW-0539">Nucleus</keyword>
<keyword id="KW-0597">Phosphoprotein</keyword>
<keyword id="KW-1185">Reference proteome</keyword>
<reference key="1">
    <citation type="journal article" date="2005" name="Science">
        <title>The genome of the basidiomycetous yeast and human pathogen Cryptococcus neoformans.</title>
        <authorList>
            <person name="Loftus B.J."/>
            <person name="Fung E."/>
            <person name="Roncaglia P."/>
            <person name="Rowley D."/>
            <person name="Amedeo P."/>
            <person name="Bruno D."/>
            <person name="Vamathevan J."/>
            <person name="Miranda M."/>
            <person name="Anderson I.J."/>
            <person name="Fraser J.A."/>
            <person name="Allen J.E."/>
            <person name="Bosdet I.E."/>
            <person name="Brent M.R."/>
            <person name="Chiu R."/>
            <person name="Doering T.L."/>
            <person name="Donlin M.J."/>
            <person name="D'Souza C.A."/>
            <person name="Fox D.S."/>
            <person name="Grinberg V."/>
            <person name="Fu J."/>
            <person name="Fukushima M."/>
            <person name="Haas B.J."/>
            <person name="Huang J.C."/>
            <person name="Janbon G."/>
            <person name="Jones S.J.M."/>
            <person name="Koo H.L."/>
            <person name="Krzywinski M.I."/>
            <person name="Kwon-Chung K.J."/>
            <person name="Lengeler K.B."/>
            <person name="Maiti R."/>
            <person name="Marra M.A."/>
            <person name="Marra R.E."/>
            <person name="Mathewson C.A."/>
            <person name="Mitchell T.G."/>
            <person name="Pertea M."/>
            <person name="Riggs F.R."/>
            <person name="Salzberg S.L."/>
            <person name="Schein J.E."/>
            <person name="Shvartsbeyn A."/>
            <person name="Shin H."/>
            <person name="Shumway M."/>
            <person name="Specht C.A."/>
            <person name="Suh B.B."/>
            <person name="Tenney A."/>
            <person name="Utterback T.R."/>
            <person name="Wickes B.L."/>
            <person name="Wortman J.R."/>
            <person name="Wye N.H."/>
            <person name="Kronstad J.W."/>
            <person name="Lodge J.K."/>
            <person name="Heitman J."/>
            <person name="Davis R.W."/>
            <person name="Fraser C.M."/>
            <person name="Hyman R.W."/>
        </authorList>
    </citation>
    <scope>NUCLEOTIDE SEQUENCE [LARGE SCALE GENOMIC DNA]</scope>
    <source>
        <strain>JEC21 / ATCC MYA-565</strain>
    </source>
</reference>
<proteinExistence type="inferred from homology"/>